<sequence>MGGGGPPARVQGTEGSQTGGGAVAVSYHPNNLDTKPLSCLPILSNFLLISSNSSLTSSTSSPLLMSSRYASAVEIPSSSAYSSTNSIVASLSRIDTTSFELLMVSRLRSSTPGKPFCSVPSVA</sequence>
<gene>
    <name type="ORF">ORF9</name>
</gene>
<protein>
    <recommendedName>
        <fullName>Uncharacterized protein 9</fullName>
    </recommendedName>
</protein>
<organism>
    <name type="scientific">Halorubrum pleomorphic virus 1</name>
    <name type="common">HRPV-1</name>
    <dbReference type="NCBI Taxonomy" id="634168"/>
    <lineage>
        <taxon>Viruses</taxon>
        <taxon>Monodnaviria</taxon>
        <taxon>Trapavirae</taxon>
        <taxon>Saleviricota</taxon>
        <taxon>Huolimaviricetes</taxon>
        <taxon>Haloruvirales</taxon>
        <taxon>Pleolipoviridae</taxon>
        <taxon>Alphapleolipovirus</taxon>
        <taxon>Alphapleolipovirus finnoniense</taxon>
    </lineage>
</organism>
<feature type="chain" id="PRO_0000420967" description="Uncharacterized protein 9">
    <location>
        <begin position="1"/>
        <end position="123"/>
    </location>
</feature>
<feature type="region of interest" description="Disordered" evidence="1">
    <location>
        <begin position="1"/>
        <end position="24"/>
    </location>
</feature>
<dbReference type="EMBL" id="FJ685651">
    <property type="protein sequence ID" value="ACO54904.1"/>
    <property type="molecule type" value="Genomic_DNA"/>
</dbReference>
<dbReference type="RefSeq" id="YP_002791894.1">
    <property type="nucleotide sequence ID" value="NC_012558.1"/>
</dbReference>
<dbReference type="KEGG" id="vg:7755269"/>
<dbReference type="Proteomes" id="UP000009401">
    <property type="component" value="Genome"/>
</dbReference>
<organismHost>
    <name type="scientific">Halorubrum sp. PV6</name>
    <dbReference type="NCBI Taxonomy" id="634157"/>
</organismHost>
<proteinExistence type="predicted"/>
<reference key="1">
    <citation type="journal article" date="2009" name="Mol. Microbiol.">
        <title>An ssDNA virus infecting archaea: a new lineage of viruses with a membrane envelope.</title>
        <authorList>
            <person name="Pietila M.K."/>
            <person name="Roine E."/>
            <person name="Paulin L."/>
            <person name="Kalkkinen N."/>
            <person name="Bamford D.H."/>
        </authorList>
    </citation>
    <scope>NUCLEOTIDE SEQUENCE [GENOMIC DNA]</scope>
</reference>
<accession>C1JJY8</accession>
<name>ORF9_HAPV1</name>
<evidence type="ECO:0000256" key="1">
    <source>
        <dbReference type="SAM" id="MobiDB-lite"/>
    </source>
</evidence>
<keyword id="KW-1185">Reference proteome</keyword>